<sequence length="258" mass="28626">MLAKRIIPCLDVRDGQVVKGVQFRNHEIIGDIVPLAQRYAQEGADELVFYDITASSDGRTVDKSWVERIAQVIDIPFCVAGGIKTIEDAEKLFAFGADKISINSPALADPTLISRLADRFGVQAIVVGIDSWFEQETGKYWVNQYTGDETRTRQTHWQLLDWVKEVQQCGAGEIVLNMMNQDGLRNGYDLAQLKLVRGVCRVPLIASGGAGKMVHFRDAFIEAKVDGALAASVFHKQIIEIGELKSYLVQSAIEIRSE</sequence>
<protein>
    <recommendedName>
        <fullName evidence="1">Imidazole glycerol phosphate synthase subunit HisF</fullName>
        <ecNumber evidence="1">4.3.2.10</ecNumber>
    </recommendedName>
    <alternativeName>
        <fullName evidence="1">IGP synthase cyclase subunit</fullName>
    </alternativeName>
    <alternativeName>
        <fullName evidence="1">IGP synthase subunit HisF</fullName>
    </alternativeName>
    <alternativeName>
        <fullName evidence="1">ImGP synthase subunit HisF</fullName>
        <shortName evidence="1">IGPS subunit HisF</shortName>
    </alternativeName>
</protein>
<feature type="chain" id="PRO_0000142164" description="Imidazole glycerol phosphate synthase subunit HisF">
    <location>
        <begin position="1"/>
        <end position="258"/>
    </location>
</feature>
<feature type="active site" evidence="1">
    <location>
        <position position="11"/>
    </location>
</feature>
<feature type="active site" evidence="1">
    <location>
        <position position="130"/>
    </location>
</feature>
<accession>Q4QN69</accession>
<name>HIS6_HAEI8</name>
<comment type="function">
    <text evidence="1">IGPS catalyzes the conversion of PRFAR and glutamine to IGP, AICAR and glutamate. The HisF subunit catalyzes the cyclization activity that produces IGP and AICAR from PRFAR using the ammonia provided by the HisH subunit.</text>
</comment>
<comment type="catalytic activity">
    <reaction evidence="1">
        <text>5-[(5-phospho-1-deoxy-D-ribulos-1-ylimino)methylamino]-1-(5-phospho-beta-D-ribosyl)imidazole-4-carboxamide + L-glutamine = D-erythro-1-(imidazol-4-yl)glycerol 3-phosphate + 5-amino-1-(5-phospho-beta-D-ribosyl)imidazole-4-carboxamide + L-glutamate + H(+)</text>
        <dbReference type="Rhea" id="RHEA:24793"/>
        <dbReference type="ChEBI" id="CHEBI:15378"/>
        <dbReference type="ChEBI" id="CHEBI:29985"/>
        <dbReference type="ChEBI" id="CHEBI:58278"/>
        <dbReference type="ChEBI" id="CHEBI:58359"/>
        <dbReference type="ChEBI" id="CHEBI:58475"/>
        <dbReference type="ChEBI" id="CHEBI:58525"/>
        <dbReference type="EC" id="4.3.2.10"/>
    </reaction>
</comment>
<comment type="pathway">
    <text evidence="1">Amino-acid biosynthesis; L-histidine biosynthesis; L-histidine from 5-phospho-alpha-D-ribose 1-diphosphate: step 5/9.</text>
</comment>
<comment type="subunit">
    <text evidence="1">Heterodimer of HisH and HisF.</text>
</comment>
<comment type="subcellular location">
    <subcellularLocation>
        <location evidence="1">Cytoplasm</location>
    </subcellularLocation>
</comment>
<comment type="similarity">
    <text evidence="1">Belongs to the HisA/HisF family.</text>
</comment>
<proteinExistence type="inferred from homology"/>
<keyword id="KW-0028">Amino-acid biosynthesis</keyword>
<keyword id="KW-0963">Cytoplasm</keyword>
<keyword id="KW-0368">Histidine biosynthesis</keyword>
<keyword id="KW-0456">Lyase</keyword>
<organism>
    <name type="scientific">Haemophilus influenzae (strain 86-028NP)</name>
    <dbReference type="NCBI Taxonomy" id="281310"/>
    <lineage>
        <taxon>Bacteria</taxon>
        <taxon>Pseudomonadati</taxon>
        <taxon>Pseudomonadota</taxon>
        <taxon>Gammaproteobacteria</taxon>
        <taxon>Pasteurellales</taxon>
        <taxon>Pasteurellaceae</taxon>
        <taxon>Haemophilus</taxon>
    </lineage>
</organism>
<gene>
    <name evidence="1" type="primary">hisF</name>
    <name type="ordered locus">NTHI0605</name>
</gene>
<evidence type="ECO:0000255" key="1">
    <source>
        <dbReference type="HAMAP-Rule" id="MF_01013"/>
    </source>
</evidence>
<reference key="1">
    <citation type="journal article" date="2005" name="J. Bacteriol.">
        <title>Genomic sequence of an otitis media isolate of nontypeable Haemophilus influenzae: comparative study with H. influenzae serotype d, strain KW20.</title>
        <authorList>
            <person name="Harrison A."/>
            <person name="Dyer D.W."/>
            <person name="Gillaspy A."/>
            <person name="Ray W.C."/>
            <person name="Mungur R."/>
            <person name="Carson M.B."/>
            <person name="Zhong H."/>
            <person name="Gipson J."/>
            <person name="Gipson M."/>
            <person name="Johnson L.S."/>
            <person name="Lewis L."/>
            <person name="Bakaletz L.O."/>
            <person name="Munson R.S. Jr."/>
        </authorList>
    </citation>
    <scope>NUCLEOTIDE SEQUENCE [LARGE SCALE GENOMIC DNA]</scope>
    <source>
        <strain>86-028NP</strain>
    </source>
</reference>
<dbReference type="EC" id="4.3.2.10" evidence="1"/>
<dbReference type="EMBL" id="CP000057">
    <property type="protein sequence ID" value="AAX87528.1"/>
    <property type="molecule type" value="Genomic_DNA"/>
</dbReference>
<dbReference type="RefSeq" id="WP_005693688.1">
    <property type="nucleotide sequence ID" value="NC_007146.2"/>
</dbReference>
<dbReference type="SMR" id="Q4QN69"/>
<dbReference type="GeneID" id="93219488"/>
<dbReference type="KEGG" id="hit:NTHI0605"/>
<dbReference type="HOGENOM" id="CLU_048577_4_0_6"/>
<dbReference type="UniPathway" id="UPA00031">
    <property type="reaction ID" value="UER00010"/>
</dbReference>
<dbReference type="Proteomes" id="UP000002525">
    <property type="component" value="Chromosome"/>
</dbReference>
<dbReference type="GO" id="GO:0005737">
    <property type="term" value="C:cytoplasm"/>
    <property type="evidence" value="ECO:0007669"/>
    <property type="project" value="UniProtKB-SubCell"/>
</dbReference>
<dbReference type="GO" id="GO:0000107">
    <property type="term" value="F:imidazoleglycerol-phosphate synthase activity"/>
    <property type="evidence" value="ECO:0007669"/>
    <property type="project" value="UniProtKB-UniRule"/>
</dbReference>
<dbReference type="GO" id="GO:0016829">
    <property type="term" value="F:lyase activity"/>
    <property type="evidence" value="ECO:0007669"/>
    <property type="project" value="UniProtKB-KW"/>
</dbReference>
<dbReference type="GO" id="GO:0000105">
    <property type="term" value="P:L-histidine biosynthetic process"/>
    <property type="evidence" value="ECO:0007669"/>
    <property type="project" value="UniProtKB-UniRule"/>
</dbReference>
<dbReference type="CDD" id="cd04731">
    <property type="entry name" value="HisF"/>
    <property type="match status" value="1"/>
</dbReference>
<dbReference type="FunFam" id="3.20.20.70:FF:000006">
    <property type="entry name" value="Imidazole glycerol phosphate synthase subunit HisF"/>
    <property type="match status" value="1"/>
</dbReference>
<dbReference type="Gene3D" id="3.20.20.70">
    <property type="entry name" value="Aldolase class I"/>
    <property type="match status" value="1"/>
</dbReference>
<dbReference type="HAMAP" id="MF_01013">
    <property type="entry name" value="HisF"/>
    <property type="match status" value="1"/>
</dbReference>
<dbReference type="InterPro" id="IPR013785">
    <property type="entry name" value="Aldolase_TIM"/>
</dbReference>
<dbReference type="InterPro" id="IPR006062">
    <property type="entry name" value="His_biosynth"/>
</dbReference>
<dbReference type="InterPro" id="IPR004651">
    <property type="entry name" value="HisF"/>
</dbReference>
<dbReference type="InterPro" id="IPR050064">
    <property type="entry name" value="IGPS_HisA/HisF"/>
</dbReference>
<dbReference type="InterPro" id="IPR011060">
    <property type="entry name" value="RibuloseP-bd_barrel"/>
</dbReference>
<dbReference type="NCBIfam" id="TIGR00735">
    <property type="entry name" value="hisF"/>
    <property type="match status" value="1"/>
</dbReference>
<dbReference type="PANTHER" id="PTHR21235:SF2">
    <property type="entry name" value="IMIDAZOLE GLYCEROL PHOSPHATE SYNTHASE HISHF"/>
    <property type="match status" value="1"/>
</dbReference>
<dbReference type="PANTHER" id="PTHR21235">
    <property type="entry name" value="IMIDAZOLE GLYCEROL PHOSPHATE SYNTHASE SUBUNIT HISF/H IGP SYNTHASE SUBUNIT HISF/H"/>
    <property type="match status" value="1"/>
</dbReference>
<dbReference type="Pfam" id="PF00977">
    <property type="entry name" value="His_biosynth"/>
    <property type="match status" value="1"/>
</dbReference>
<dbReference type="SUPFAM" id="SSF51366">
    <property type="entry name" value="Ribulose-phoshate binding barrel"/>
    <property type="match status" value="1"/>
</dbReference>